<reference key="1">
    <citation type="journal article" date="2000" name="DNA Res.">
        <title>Structural analysis of Arabidopsis thaliana chromosome 3. II. Sequence features of the 4,251,695 bp regions covered by 90 P1, TAC and BAC clones.</title>
        <authorList>
            <person name="Kaneko T."/>
            <person name="Katoh T."/>
            <person name="Sato S."/>
            <person name="Nakamura Y."/>
            <person name="Asamizu E."/>
            <person name="Tabata S."/>
        </authorList>
    </citation>
    <scope>NUCLEOTIDE SEQUENCE [LARGE SCALE GENOMIC DNA]</scope>
    <source>
        <strain>cv. Columbia</strain>
    </source>
</reference>
<reference key="2">
    <citation type="journal article" date="2017" name="Plant J.">
        <title>Araport11: a complete reannotation of the Arabidopsis thaliana reference genome.</title>
        <authorList>
            <person name="Cheng C.Y."/>
            <person name="Krishnakumar V."/>
            <person name="Chan A.P."/>
            <person name="Thibaud-Nissen F."/>
            <person name="Schobel S."/>
            <person name="Town C.D."/>
        </authorList>
    </citation>
    <scope>GENOME REANNOTATION</scope>
    <source>
        <strain>cv. Columbia</strain>
    </source>
</reference>
<reference key="3">
    <citation type="journal article" date="2002" name="Science">
        <title>Functional annotation of a full-length Arabidopsis cDNA collection.</title>
        <authorList>
            <person name="Seki M."/>
            <person name="Narusaka M."/>
            <person name="Kamiya A."/>
            <person name="Ishida J."/>
            <person name="Satou M."/>
            <person name="Sakurai T."/>
            <person name="Nakajima M."/>
            <person name="Enju A."/>
            <person name="Akiyama K."/>
            <person name="Oono Y."/>
            <person name="Muramatsu M."/>
            <person name="Hayashizaki Y."/>
            <person name="Kawai J."/>
            <person name="Carninci P."/>
            <person name="Itoh M."/>
            <person name="Ishii Y."/>
            <person name="Arakawa T."/>
            <person name="Shibata K."/>
            <person name="Shinagawa A."/>
            <person name="Shinozaki K."/>
        </authorList>
    </citation>
    <scope>NUCLEOTIDE SEQUENCE [LARGE SCALE MRNA]</scope>
    <source>
        <strain>cv. Columbia</strain>
    </source>
</reference>
<reference key="4">
    <citation type="journal article" date="2003" name="Science">
        <title>Empirical analysis of transcriptional activity in the Arabidopsis genome.</title>
        <authorList>
            <person name="Yamada K."/>
            <person name="Lim J."/>
            <person name="Dale J.M."/>
            <person name="Chen H."/>
            <person name="Shinn P."/>
            <person name="Palm C.J."/>
            <person name="Southwick A.M."/>
            <person name="Wu H.C."/>
            <person name="Kim C.J."/>
            <person name="Nguyen M."/>
            <person name="Pham P.K."/>
            <person name="Cheuk R.F."/>
            <person name="Karlin-Newmann G."/>
            <person name="Liu S.X."/>
            <person name="Lam B."/>
            <person name="Sakano H."/>
            <person name="Wu T."/>
            <person name="Yu G."/>
            <person name="Miranda M."/>
            <person name="Quach H.L."/>
            <person name="Tripp M."/>
            <person name="Chang C.H."/>
            <person name="Lee J.M."/>
            <person name="Toriumi M.J."/>
            <person name="Chan M.M."/>
            <person name="Tang C.C."/>
            <person name="Onodera C.S."/>
            <person name="Deng J.M."/>
            <person name="Akiyama K."/>
            <person name="Ansari Y."/>
            <person name="Arakawa T."/>
            <person name="Banh J."/>
            <person name="Banno F."/>
            <person name="Bowser L."/>
            <person name="Brooks S.Y."/>
            <person name="Carninci P."/>
            <person name="Chao Q."/>
            <person name="Choy N."/>
            <person name="Enju A."/>
            <person name="Goldsmith A.D."/>
            <person name="Gurjal M."/>
            <person name="Hansen N.F."/>
            <person name="Hayashizaki Y."/>
            <person name="Johnson-Hopson C."/>
            <person name="Hsuan V.W."/>
            <person name="Iida K."/>
            <person name="Karnes M."/>
            <person name="Khan S."/>
            <person name="Koesema E."/>
            <person name="Ishida J."/>
            <person name="Jiang P.X."/>
            <person name="Jones T."/>
            <person name="Kawai J."/>
            <person name="Kamiya A."/>
            <person name="Meyers C."/>
            <person name="Nakajima M."/>
            <person name="Narusaka M."/>
            <person name="Seki M."/>
            <person name="Sakurai T."/>
            <person name="Satou M."/>
            <person name="Tamse R."/>
            <person name="Vaysberg M."/>
            <person name="Wallender E.K."/>
            <person name="Wong C."/>
            <person name="Yamamura Y."/>
            <person name="Yuan S."/>
            <person name="Shinozaki K."/>
            <person name="Davis R.W."/>
            <person name="Theologis A."/>
            <person name="Ecker J.R."/>
        </authorList>
    </citation>
    <scope>NUCLEOTIDE SEQUENCE [LARGE SCALE MRNA]</scope>
    <source>
        <strain>cv. Columbia</strain>
    </source>
</reference>
<reference key="5">
    <citation type="journal article" date="2003" name="Plant Physiol.">
        <title>Analysis of the small GTPase gene superfamily of Arabidopsis.</title>
        <authorList>
            <person name="Vernoud V."/>
            <person name="Horton A.C."/>
            <person name="Yang Z."/>
            <person name="Nielsen E."/>
        </authorList>
    </citation>
    <scope>GENE FAMILY</scope>
    <scope>NOMENCLATURE</scope>
</reference>
<comment type="function">
    <text evidence="1">Intracellular vesicle trafficking and protein transport.</text>
</comment>
<comment type="subcellular location">
    <subcellularLocation>
        <location evidence="2">Cell membrane</location>
        <topology evidence="2">Lipid-anchor</topology>
        <orientation evidence="2">Cytoplasmic side</orientation>
    </subcellularLocation>
</comment>
<comment type="similarity">
    <text evidence="2">Belongs to the small GTPase superfamily. Rab family.</text>
</comment>
<organism>
    <name type="scientific">Arabidopsis thaliana</name>
    <name type="common">Mouse-ear cress</name>
    <dbReference type="NCBI Taxonomy" id="3702"/>
    <lineage>
        <taxon>Eukaryota</taxon>
        <taxon>Viridiplantae</taxon>
        <taxon>Streptophyta</taxon>
        <taxon>Embryophyta</taxon>
        <taxon>Tracheophyta</taxon>
        <taxon>Spermatophyta</taxon>
        <taxon>Magnoliopsida</taxon>
        <taxon>eudicotyledons</taxon>
        <taxon>Gunneridae</taxon>
        <taxon>Pentapetalae</taxon>
        <taxon>rosids</taxon>
        <taxon>malvids</taxon>
        <taxon>Brassicales</taxon>
        <taxon>Brassicaceae</taxon>
        <taxon>Camelineae</taxon>
        <taxon>Arabidopsis</taxon>
    </lineage>
</organism>
<evidence type="ECO:0000250" key="1"/>
<evidence type="ECO:0000305" key="2"/>
<dbReference type="EMBL" id="AP000370">
    <property type="protein sequence ID" value="BAA97069.1"/>
    <property type="molecule type" value="Genomic_DNA"/>
</dbReference>
<dbReference type="EMBL" id="CP002686">
    <property type="protein sequence ID" value="AEE75611.1"/>
    <property type="molecule type" value="Genomic_DNA"/>
</dbReference>
<dbReference type="EMBL" id="AK118727">
    <property type="protein sequence ID" value="BAC43321.1"/>
    <property type="molecule type" value="mRNA"/>
</dbReference>
<dbReference type="EMBL" id="BT005565">
    <property type="protein sequence ID" value="AAO63985.1"/>
    <property type="molecule type" value="mRNA"/>
</dbReference>
<dbReference type="RefSeq" id="NP_188124.1">
    <property type="nucleotide sequence ID" value="NM_112368.4"/>
</dbReference>
<dbReference type="SMR" id="Q9LK99"/>
<dbReference type="FunCoup" id="Q9LK99">
    <property type="interactions" value="3062"/>
</dbReference>
<dbReference type="STRING" id="3702.Q9LK99"/>
<dbReference type="iPTMnet" id="Q9LK99"/>
<dbReference type="PaxDb" id="3702-AT3G15060.1"/>
<dbReference type="ProteomicsDB" id="225901"/>
<dbReference type="EnsemblPlants" id="AT3G15060.1">
    <property type="protein sequence ID" value="AT3G15060.1"/>
    <property type="gene ID" value="AT3G15060"/>
</dbReference>
<dbReference type="GeneID" id="820735"/>
<dbReference type="Gramene" id="AT3G15060.1">
    <property type="protein sequence ID" value="AT3G15060.1"/>
    <property type="gene ID" value="AT3G15060"/>
</dbReference>
<dbReference type="KEGG" id="ath:AT3G15060"/>
<dbReference type="Araport" id="AT3G15060"/>
<dbReference type="TAIR" id="AT3G15060">
    <property type="gene designation" value="RABA1G"/>
</dbReference>
<dbReference type="eggNOG" id="KOG0087">
    <property type="taxonomic scope" value="Eukaryota"/>
</dbReference>
<dbReference type="HOGENOM" id="CLU_041217_23_0_1"/>
<dbReference type="InParanoid" id="Q9LK99"/>
<dbReference type="OMA" id="PRGHTIN"/>
<dbReference type="OrthoDB" id="9989112at2759"/>
<dbReference type="PhylomeDB" id="Q9LK99"/>
<dbReference type="PRO" id="PR:Q9LK99"/>
<dbReference type="Proteomes" id="UP000006548">
    <property type="component" value="Chromosome 3"/>
</dbReference>
<dbReference type="ExpressionAtlas" id="Q9LK99">
    <property type="expression patterns" value="baseline and differential"/>
</dbReference>
<dbReference type="GO" id="GO:0005886">
    <property type="term" value="C:plasma membrane"/>
    <property type="evidence" value="ECO:0007669"/>
    <property type="project" value="UniProtKB-SubCell"/>
</dbReference>
<dbReference type="GO" id="GO:0005525">
    <property type="term" value="F:GTP binding"/>
    <property type="evidence" value="ECO:0007669"/>
    <property type="project" value="UniProtKB-KW"/>
</dbReference>
<dbReference type="GO" id="GO:0003924">
    <property type="term" value="F:GTPase activity"/>
    <property type="evidence" value="ECO:0007669"/>
    <property type="project" value="InterPro"/>
</dbReference>
<dbReference type="GO" id="GO:0042546">
    <property type="term" value="P:cell wall biogenesis"/>
    <property type="evidence" value="ECO:0000315"/>
    <property type="project" value="TAIR"/>
</dbReference>
<dbReference type="GO" id="GO:0015031">
    <property type="term" value="P:protein transport"/>
    <property type="evidence" value="ECO:0007669"/>
    <property type="project" value="UniProtKB-KW"/>
</dbReference>
<dbReference type="CDD" id="cd01868">
    <property type="entry name" value="Rab11_like"/>
    <property type="match status" value="1"/>
</dbReference>
<dbReference type="FunFam" id="3.40.50.300:FF:000067">
    <property type="entry name" value="ras-related protein RABA1f"/>
    <property type="match status" value="1"/>
</dbReference>
<dbReference type="Gene3D" id="3.40.50.300">
    <property type="entry name" value="P-loop containing nucleotide triphosphate hydrolases"/>
    <property type="match status" value="1"/>
</dbReference>
<dbReference type="InterPro" id="IPR027417">
    <property type="entry name" value="P-loop_NTPase"/>
</dbReference>
<dbReference type="InterPro" id="IPR050209">
    <property type="entry name" value="Rab_GTPases_membrane_traffic"/>
</dbReference>
<dbReference type="InterPro" id="IPR005225">
    <property type="entry name" value="Small_GTP-bd"/>
</dbReference>
<dbReference type="InterPro" id="IPR001806">
    <property type="entry name" value="Small_GTPase"/>
</dbReference>
<dbReference type="NCBIfam" id="TIGR00231">
    <property type="entry name" value="small_GTP"/>
    <property type="match status" value="1"/>
</dbReference>
<dbReference type="PANTHER" id="PTHR47979">
    <property type="entry name" value="DRAB11-RELATED"/>
    <property type="match status" value="1"/>
</dbReference>
<dbReference type="Pfam" id="PF00071">
    <property type="entry name" value="Ras"/>
    <property type="match status" value="1"/>
</dbReference>
<dbReference type="PRINTS" id="PR00449">
    <property type="entry name" value="RASTRNSFRMNG"/>
</dbReference>
<dbReference type="SMART" id="SM00175">
    <property type="entry name" value="RAB"/>
    <property type="match status" value="1"/>
</dbReference>
<dbReference type="SMART" id="SM00176">
    <property type="entry name" value="RAN"/>
    <property type="match status" value="1"/>
</dbReference>
<dbReference type="SMART" id="SM00173">
    <property type="entry name" value="RAS"/>
    <property type="match status" value="1"/>
</dbReference>
<dbReference type="SMART" id="SM00174">
    <property type="entry name" value="RHO"/>
    <property type="match status" value="1"/>
</dbReference>
<dbReference type="SUPFAM" id="SSF52540">
    <property type="entry name" value="P-loop containing nucleoside triphosphate hydrolases"/>
    <property type="match status" value="1"/>
</dbReference>
<dbReference type="PROSITE" id="PS51419">
    <property type="entry name" value="RAB"/>
    <property type="match status" value="1"/>
</dbReference>
<sequence length="217" mass="24283">MAAYRADDDYDFLYKVVLIGDSGVGKSNLLSRFTRNEFSLESKSTIGVEFATRSIHVDEKIVKAQIWDTAGQERYRAITSAYYRGAVGALLVYDVTRHVTFENVERWLKELRDHTEANIVIMLVGNKADLRHLRAVSTEDAKAFAERENTFFMETSALEALNVENAFTEVLSQIYRVASKKALDIGDDHTTLPKGQSINVGSKDDVSEVKKVGCCSS</sequence>
<protein>
    <recommendedName>
        <fullName>Ras-related protein RABA1g</fullName>
        <shortName>AtRABA1g</shortName>
    </recommendedName>
</protein>
<feature type="chain" id="PRO_0000407338" description="Ras-related protein RABA1g">
    <location>
        <begin position="1"/>
        <end position="217"/>
    </location>
</feature>
<feature type="short sequence motif" description="Effector region" evidence="1">
    <location>
        <begin position="42"/>
        <end position="50"/>
    </location>
</feature>
<feature type="binding site" evidence="1">
    <location>
        <begin position="20"/>
        <end position="27"/>
    </location>
    <ligand>
        <name>GTP</name>
        <dbReference type="ChEBI" id="CHEBI:37565"/>
    </ligand>
</feature>
<feature type="binding site" evidence="1">
    <location>
        <begin position="68"/>
        <end position="72"/>
    </location>
    <ligand>
        <name>GTP</name>
        <dbReference type="ChEBI" id="CHEBI:37565"/>
    </ligand>
</feature>
<feature type="binding site" evidence="1">
    <location>
        <begin position="126"/>
        <end position="129"/>
    </location>
    <ligand>
        <name>GTP</name>
        <dbReference type="ChEBI" id="CHEBI:37565"/>
    </ligand>
</feature>
<feature type="binding site" evidence="1">
    <location>
        <begin position="156"/>
        <end position="157"/>
    </location>
    <ligand>
        <name>GTP</name>
        <dbReference type="ChEBI" id="CHEBI:37565"/>
    </ligand>
</feature>
<feature type="lipid moiety-binding region" description="S-geranylgeranyl cysteine" evidence="1">
    <location>
        <position position="214"/>
    </location>
</feature>
<feature type="lipid moiety-binding region" description="S-geranylgeranyl cysteine" evidence="1">
    <location>
        <position position="215"/>
    </location>
</feature>
<keyword id="KW-1003">Cell membrane</keyword>
<keyword id="KW-0342">GTP-binding</keyword>
<keyword id="KW-0449">Lipoprotein</keyword>
<keyword id="KW-0472">Membrane</keyword>
<keyword id="KW-0547">Nucleotide-binding</keyword>
<keyword id="KW-0636">Prenylation</keyword>
<keyword id="KW-0653">Protein transport</keyword>
<keyword id="KW-1185">Reference proteome</keyword>
<keyword id="KW-0813">Transport</keyword>
<name>RAA1G_ARATH</name>
<proteinExistence type="evidence at transcript level"/>
<gene>
    <name type="primary">RABA1G</name>
    <name type="ordered locus">At3g15060</name>
    <name type="ORF">K15M2.21</name>
</gene>
<accession>Q9LK99</accession>